<comment type="function">
    <text evidence="4 5 6 8 9 10">Scaffolding protein that enhances integrin activation mediated by TLN1 and/or TLN2, but activates integrins only weakly by itself. Binds to membranes enriched in phosphoinositides. Enhances integrin-mediated cell adhesion onto the extracellular matrix and cell spreading; this requires both its ability to interact with integrins and with phospholipid membranes. Required for the assembly of focal adhesions. Participates in the connection between extracellular matrix adhesion sites and the actin cytoskeleton and also in the orchestration of actin assembly and cell shape modulation. Recruits FBLIM1 to focal adhesions. Plays a role in the TGFB1 and integrin signaling pathways. Stabilizes active CTNNB1 and plays a role in the regulation of transcription mediated by CTNNB1 and TCF7L2/TCF4 and in Wnt signaling.</text>
</comment>
<comment type="subunit">
    <text evidence="1 4 5 6 7 8 10">Interacts with ILK (By similarity). Interacts with FBLIM1. Interacts with ITGB1 and ITGB3. Interacts with active, unphosphorylated CTNNB1. Identified in a complex with CTNNB1 and TCF7L2/TCF4. Interacts with ITGB1; the interaction is inhibited in presence of ITGB1BP1.</text>
</comment>
<comment type="interaction">
    <interactant intactId="EBI-4399465">
        <id>Q96AC1</id>
    </interactant>
    <interactant intactId="EBI-491549">
        <id>P35222</id>
        <label>CTNNB1</label>
    </interactant>
    <organismsDiffer>false</organismsDiffer>
    <experiments>13</experiments>
</comment>
<comment type="interaction">
    <interactant intactId="EBI-4399465">
        <id>Q96AC1</id>
    </interactant>
    <interactant intactId="EBI-533224">
        <id>P15884</id>
        <label>TCF4</label>
    </interactant>
    <organismsDiffer>false</organismsDiffer>
    <experiments>6</experiments>
</comment>
<comment type="subcellular location">
    <subcellularLocation>
        <location>Cytoplasm</location>
    </subcellularLocation>
    <subcellularLocation>
        <location>Cytoplasm</location>
        <location>Cell cortex</location>
    </subcellularLocation>
    <subcellularLocation>
        <location>Cytoplasm</location>
        <location>Cytoskeleton</location>
    </subcellularLocation>
    <subcellularLocation>
        <location>Cytoplasm</location>
        <location>Cytoskeleton</location>
        <location>Stress fiber</location>
    </subcellularLocation>
    <subcellularLocation>
        <location>Cell junction</location>
        <location>Focal adhesion</location>
    </subcellularLocation>
    <subcellularLocation>
        <location>Membrane</location>
        <topology>Peripheral membrane protein</topology>
        <orientation>Cytoplasmic side</orientation>
    </subcellularLocation>
    <subcellularLocation>
        <location>Cell projection</location>
        <location>Lamellipodium membrane</location>
        <topology>Peripheral membrane protein</topology>
        <orientation>Cytoplasmic side</orientation>
    </subcellularLocation>
    <subcellularLocation>
        <location>Nucleus</location>
    </subcellularLocation>
    <subcellularLocation>
        <location evidence="1">Cytoplasm</location>
        <location evidence="1">Myofibril</location>
        <location evidence="1">Sarcomere</location>
        <location evidence="1">I band</location>
    </subcellularLocation>
    <subcellularLocation>
        <location evidence="1">Cell surface</location>
    </subcellularLocation>
    <text>Colocalizes with actin stress fibers at cell-ECM focal adhesion sites. Colocalizes with ITGB3 at lamellipodia at the leading edge of spreading cells. Binds to membranes that contain phosphatidylinositides.</text>
</comment>
<comment type="alternative products">
    <event type="alternative splicing"/>
    <isoform>
        <id>Q96AC1-1</id>
        <name>1</name>
        <sequence type="displayed"/>
    </isoform>
    <isoform>
        <id>Q96AC1-2</id>
        <name>2</name>
        <sequence type="described" ref="VSP_008783 VSP_008784 VSP_008785"/>
    </isoform>
    <isoform>
        <id>Q96AC1-3</id>
        <name>3</name>
        <sequence type="described" ref="VSP_008783"/>
    </isoform>
</comment>
<comment type="tissue specificity">
    <text>Ubiquitous. Found in numerous tumor tissues.</text>
</comment>
<comment type="induction">
    <text evidence="11">By serum in lung fetal fibroblast cultured cells.</text>
</comment>
<comment type="domain">
    <text>The FERM domain is not correctly detected by PROSITE or Pfam techniques because it contains the insertion of a PH domain.</text>
</comment>
<comment type="domain">
    <text evidence="8">The PH domain binds phospholipids. Binds preferentially phosphatidylinositol-3,4,5-trisphosphate, and has lower affinity for phosphatidylinositol-4,5-bisphosphate (PubMed:22030399).</text>
</comment>
<comment type="domain">
    <text evidence="9">The N-terminal region displays a ubiquitin-type fold and mediates interaction with membranes containing negatively charged phosphatidylinositol phosphate via a surface enriched in positively charged residues.</text>
</comment>
<comment type="miscellaneous">
    <molecule>Isoform 2</molecule>
    <text evidence="14">May be due to an exon inclusion and an intron retention.</text>
</comment>
<comment type="similarity">
    <text evidence="14">Belongs to the kindlin family.</text>
</comment>
<comment type="sequence caution" evidence="14">
    <conflict type="erroneous initiation">
        <sequence resource="EMBL-CDS" id="CAA80852"/>
    </conflict>
    <text>Extended N-terminus.</text>
</comment>
<comment type="online information" name="Wikipedia">
    <link uri="https://en.wikipedia.org/wiki/FERMT2"/>
    <text>FERMT2 entry</text>
</comment>
<protein>
    <recommendedName>
        <fullName>Fermitin family homolog 2</fullName>
    </recommendedName>
    <alternativeName>
        <fullName>Kindlin-2</fullName>
    </alternativeName>
    <alternativeName>
        <fullName>Mitogen-inducible gene 2 protein</fullName>
        <shortName>MIG-2</shortName>
    </alternativeName>
    <alternativeName>
        <fullName>Pleckstrin homology domain-containing family C member 1</fullName>
        <shortName>PH domain-containing family C member 1</shortName>
    </alternativeName>
</protein>
<sequence length="680" mass="77861">MALDGIRMPDGCYADGTWELSVHVTDLNRDVTLRVTGEVHIGGVMLKLVEKLDVKKDWSDHALWWEKKRTWLLKTHWTLDKYGIQADAKLQFTPQHKLLRLQLPNMKYVKVKVNFSDRVFKAVSDICKTFNIRHPEELSLLKKPRDPTKKKKKKLDDQSEDEALELEGPLITPGSGSIYSSPGLYSKTMTPTYDAHDGSPLSPTSAWFGDSALSEGNPGILAVSQPITSPEILAKMFKPQALLDKAKINQGWLDSSRSLMEQDVKENEALLLRFKYYSFFDLNPKYDAIRINQLYEQAKWAILLEEIECTEEEMMMFAALQYHINKLSIMTSENHLNNSDKEVDEVDAALSDLEITLEGGKTSTILGDITSIPELADYIKVFKPKKLTLKGYKQYWCTFKDTSISCYKSKEESSGTPAHQMNLRGCEVTPDVNISGQKFNIKLLIPVAEGMNEIWLRCDNEKQYAHWMAACRLASKGKTMADSSYNLEVQNILSFLKMQHLNPDPQLIPEQITTDITPECLVSPRYLKKYKNKQITARILEAHQNVAQMSLIEAKMRFIQAWQSLPEFGITHFIARFQGGKKEELIGIAYNRLIRMDASTGDAIKTWRFSNMKQWNVNWEIKMVTVEFADEVRLSFICTEVDCKVVHEFIGGYIFLSTRAKDQNESLDEEMFYKLTSGWV</sequence>
<evidence type="ECO:0000250" key="1"/>
<evidence type="ECO:0000255" key="2">
    <source>
        <dbReference type="PROSITE-ProRule" id="PRU00145"/>
    </source>
</evidence>
<evidence type="ECO:0000256" key="3">
    <source>
        <dbReference type="SAM" id="MobiDB-lite"/>
    </source>
</evidence>
<evidence type="ECO:0000269" key="4">
    <source>
    </source>
</evidence>
<evidence type="ECO:0000269" key="5">
    <source>
    </source>
</evidence>
<evidence type="ECO:0000269" key="6">
    <source>
    </source>
</evidence>
<evidence type="ECO:0000269" key="7">
    <source>
    </source>
</evidence>
<evidence type="ECO:0000269" key="8">
    <source>
    </source>
</evidence>
<evidence type="ECO:0000269" key="9">
    <source>
    </source>
</evidence>
<evidence type="ECO:0000269" key="10">
    <source>
    </source>
</evidence>
<evidence type="ECO:0000269" key="11">
    <source>
    </source>
</evidence>
<evidence type="ECO:0000303" key="12">
    <source ref="4"/>
</evidence>
<evidence type="ECO:0000303" key="13">
    <source ref="5"/>
</evidence>
<evidence type="ECO:0000305" key="14"/>
<evidence type="ECO:0007744" key="15">
    <source>
    </source>
</evidence>
<evidence type="ECO:0007744" key="16">
    <source>
    </source>
</evidence>
<evidence type="ECO:0007744" key="17">
    <source>
    </source>
</evidence>
<evidence type="ECO:0007744" key="18">
    <source>
    </source>
</evidence>
<evidence type="ECO:0007744" key="19">
    <source>
    </source>
</evidence>
<evidence type="ECO:0007744" key="20">
    <source>
    </source>
</evidence>
<evidence type="ECO:0007744" key="21">
    <source>
    </source>
</evidence>
<evidence type="ECO:0007829" key="22">
    <source>
        <dbReference type="PDB" id="2LGX"/>
    </source>
</evidence>
<evidence type="ECO:0007829" key="23">
    <source>
        <dbReference type="PDB" id="2MSU"/>
    </source>
</evidence>
<evidence type="ECO:0007829" key="24">
    <source>
        <dbReference type="PDB" id="4F7H"/>
    </source>
</evidence>
<evidence type="ECO:0007829" key="25">
    <source>
        <dbReference type="PDB" id="6U4N"/>
    </source>
</evidence>
<reference key="1">
    <citation type="journal article" date="1994" name="J. Cell Sci.">
        <title>Identification of serum-inducible genes: different patterns of gene regulation during G0-&gt;S and G1-&gt;S progression.</title>
        <authorList>
            <person name="Wick M."/>
            <person name="Buerger C."/>
            <person name="Bruesselbach S."/>
            <person name="Lucibello F.C."/>
            <person name="Mueller R."/>
        </authorList>
    </citation>
    <scope>NUCLEOTIDE SEQUENCE [MRNA] (ISOFORM 1)</scope>
    <scope>INDUCTION</scope>
    <source>
        <tissue>Lung fibroblast</tissue>
    </source>
</reference>
<reference key="2">
    <citation type="journal article" date="2003" name="Biochim. Biophys. Acta">
        <title>URP1: a member of a novel family of PH and FERM domain-containing membrane-associated proteins is significantly over-expressed in lung and colon carcinomas.</title>
        <authorList>
            <person name="Weinstein E.J."/>
            <person name="Bourner M."/>
            <person name="Head R."/>
            <person name="Zakeri H."/>
            <person name="Bauer C."/>
            <person name="Mazzarella R."/>
        </authorList>
    </citation>
    <scope>NUCLEOTIDE SEQUENCE [MRNA] (ISOFORM 1)</scope>
    <scope>GENOMIC ORGANIZATION</scope>
    <source>
        <tissue>Colon tumor</tissue>
    </source>
</reference>
<reference key="3">
    <citation type="journal article" date="2003" name="Cell">
        <title>Migfilin and Mig-2 link focal adhesions to filamin and the actin cytoskeleton and function in cell shape modulation.</title>
        <authorList>
            <person name="Tu Y."/>
            <person name="Wu S."/>
            <person name="Shi X."/>
            <person name="Chen K."/>
            <person name="Wu C."/>
        </authorList>
    </citation>
    <scope>NUCLEOTIDE SEQUENCE [MRNA]</scope>
    <scope>FUNCTION</scope>
    <scope>SUBCELLULAR LOCATION</scope>
    <scope>INTERACTION WITH FBLIM1</scope>
    <source>
        <tissue>Lung</tissue>
    </source>
</reference>
<reference key="4">
    <citation type="submission" date="2008-08" db="EMBL/GenBank/DDBJ databases">
        <authorList>
            <person name="Tan S.-M."/>
            <person name="Li Y.-F."/>
        </authorList>
    </citation>
    <scope>NUCLEOTIDE SEQUENCE [MRNA] (ISOFORM 3)</scope>
</reference>
<reference key="5">
    <citation type="submission" date="2003-01" db="EMBL/GenBank/DDBJ databases">
        <title>Full-length cDNA libraries and normalization.</title>
        <authorList>
            <person name="Li W.B."/>
            <person name="Gruber C."/>
            <person name="Jessee J."/>
            <person name="Polayes D."/>
        </authorList>
    </citation>
    <scope>NUCLEOTIDE SEQUENCE [LARGE SCALE MRNA] (ISOFORM 2)</scope>
    <source>
        <tissue>Placenta</tissue>
    </source>
</reference>
<reference key="6">
    <citation type="journal article" date="2003" name="Nature">
        <title>The DNA sequence and analysis of human chromosome 14.</title>
        <authorList>
            <person name="Heilig R."/>
            <person name="Eckenberg R."/>
            <person name="Petit J.-L."/>
            <person name="Fonknechten N."/>
            <person name="Da Silva C."/>
            <person name="Cattolico L."/>
            <person name="Levy M."/>
            <person name="Barbe V."/>
            <person name="De Berardinis V."/>
            <person name="Ureta-Vidal A."/>
            <person name="Pelletier E."/>
            <person name="Vico V."/>
            <person name="Anthouard V."/>
            <person name="Rowen L."/>
            <person name="Madan A."/>
            <person name="Qin S."/>
            <person name="Sun H."/>
            <person name="Du H."/>
            <person name="Pepin K."/>
            <person name="Artiguenave F."/>
            <person name="Robert C."/>
            <person name="Cruaud C."/>
            <person name="Bruels T."/>
            <person name="Jaillon O."/>
            <person name="Friedlander L."/>
            <person name="Samson G."/>
            <person name="Brottier P."/>
            <person name="Cure S."/>
            <person name="Segurens B."/>
            <person name="Aniere F."/>
            <person name="Samain S."/>
            <person name="Crespeau H."/>
            <person name="Abbasi N."/>
            <person name="Aiach N."/>
            <person name="Boscus D."/>
            <person name="Dickhoff R."/>
            <person name="Dors M."/>
            <person name="Dubois I."/>
            <person name="Friedman C."/>
            <person name="Gouyvenoux M."/>
            <person name="James R."/>
            <person name="Madan A."/>
            <person name="Mairey-Estrada B."/>
            <person name="Mangenot S."/>
            <person name="Martins N."/>
            <person name="Menard M."/>
            <person name="Oztas S."/>
            <person name="Ratcliffe A."/>
            <person name="Shaffer T."/>
            <person name="Trask B."/>
            <person name="Vacherie B."/>
            <person name="Bellemere C."/>
            <person name="Belser C."/>
            <person name="Besnard-Gonnet M."/>
            <person name="Bartol-Mavel D."/>
            <person name="Boutard M."/>
            <person name="Briez-Silla S."/>
            <person name="Combette S."/>
            <person name="Dufosse-Laurent V."/>
            <person name="Ferron C."/>
            <person name="Lechaplais C."/>
            <person name="Louesse C."/>
            <person name="Muselet D."/>
            <person name="Magdelenat G."/>
            <person name="Pateau E."/>
            <person name="Petit E."/>
            <person name="Sirvain-Trukniewicz P."/>
            <person name="Trybou A."/>
            <person name="Vega-Czarny N."/>
            <person name="Bataille E."/>
            <person name="Bluet E."/>
            <person name="Bordelais I."/>
            <person name="Dubois M."/>
            <person name="Dumont C."/>
            <person name="Guerin T."/>
            <person name="Haffray S."/>
            <person name="Hammadi R."/>
            <person name="Muanga J."/>
            <person name="Pellouin V."/>
            <person name="Robert D."/>
            <person name="Wunderle E."/>
            <person name="Gauguet G."/>
            <person name="Roy A."/>
            <person name="Sainte-Marthe L."/>
            <person name="Verdier J."/>
            <person name="Verdier-Discala C."/>
            <person name="Hillier L.W."/>
            <person name="Fulton L."/>
            <person name="McPherson J."/>
            <person name="Matsuda F."/>
            <person name="Wilson R."/>
            <person name="Scarpelli C."/>
            <person name="Gyapay G."/>
            <person name="Wincker P."/>
            <person name="Saurin W."/>
            <person name="Quetier F."/>
            <person name="Waterston R."/>
            <person name="Hood L."/>
            <person name="Weissenbach J."/>
        </authorList>
    </citation>
    <scope>NUCLEOTIDE SEQUENCE [LARGE SCALE GENOMIC DNA]</scope>
</reference>
<reference key="7">
    <citation type="journal article" date="2004" name="Genome Res.">
        <title>The status, quality, and expansion of the NIH full-length cDNA project: the Mammalian Gene Collection (MGC).</title>
        <authorList>
            <consortium name="The MGC Project Team"/>
        </authorList>
    </citation>
    <scope>NUCLEOTIDE SEQUENCE [LARGE SCALE MRNA] (ISOFORM 1)</scope>
    <source>
        <tissue>Choriocarcinoma</tissue>
        <tissue>Lung carcinoma</tissue>
        <tissue>Placenta</tissue>
    </source>
</reference>
<reference key="8">
    <citation type="journal article" date="2008" name="J. Cell Biol.">
        <title>Kindlin-2 (Mig-2): a co-activator of beta3 integrins.</title>
        <authorList>
            <person name="Ma Y.Q."/>
            <person name="Qin J."/>
            <person name="Wu C."/>
            <person name="Plow E.F."/>
        </authorList>
    </citation>
    <scope>FUNCTION</scope>
    <scope>INTERACTION WITH ITGB3</scope>
    <scope>SUBCELLULAR LOCATION</scope>
    <scope>MUTAGENESIS OF 614-GLN-TRP-615</scope>
</reference>
<reference key="9">
    <citation type="journal article" date="2008" name="Mol. Cell">
        <title>Kinase-selective enrichment enables quantitative phosphoproteomics of the kinome across the cell cycle.</title>
        <authorList>
            <person name="Daub H."/>
            <person name="Olsen J.V."/>
            <person name="Bairlein M."/>
            <person name="Gnad F."/>
            <person name="Oppermann F.S."/>
            <person name="Korner R."/>
            <person name="Greff Z."/>
            <person name="Keri G."/>
            <person name="Stemmann O."/>
            <person name="Mann M."/>
        </authorList>
    </citation>
    <scope>PHOSPHORYLATION [LARGE SCALE ANALYSIS] AT SER-666</scope>
    <scope>IDENTIFICATION BY MASS SPECTROMETRY [LARGE SCALE ANALYSIS]</scope>
    <source>
        <tissue>Cervix carcinoma</tissue>
    </source>
</reference>
<reference key="10">
    <citation type="journal article" date="2008" name="Proc. Natl. Acad. Sci. U.S.A.">
        <title>A quantitative atlas of mitotic phosphorylation.</title>
        <authorList>
            <person name="Dephoure N."/>
            <person name="Zhou C."/>
            <person name="Villen J."/>
            <person name="Beausoleil S.A."/>
            <person name="Bakalarski C.E."/>
            <person name="Elledge S.J."/>
            <person name="Gygi S.P."/>
        </authorList>
    </citation>
    <scope>PHOSPHORYLATION [LARGE SCALE ANALYSIS] AT SER-159; SER-181 AND SER-666</scope>
    <scope>IDENTIFICATION BY MASS SPECTROMETRY [LARGE SCALE ANALYSIS]</scope>
    <source>
        <tissue>Cervix carcinoma</tissue>
    </source>
</reference>
<reference key="11">
    <citation type="journal article" date="2009" name="Anal. Chem.">
        <title>Lys-N and trypsin cover complementary parts of the phosphoproteome in a refined SCX-based approach.</title>
        <authorList>
            <person name="Gauci S."/>
            <person name="Helbig A.O."/>
            <person name="Slijper M."/>
            <person name="Krijgsveld J."/>
            <person name="Heck A.J."/>
            <person name="Mohammed S."/>
        </authorList>
    </citation>
    <scope>IDENTIFICATION BY MASS SPECTROMETRY [LARGE SCALE ANALYSIS]</scope>
</reference>
<reference key="12">
    <citation type="journal article" date="2009" name="Sci. Signal.">
        <title>Quantitative phosphoproteomic analysis of T cell receptor signaling reveals system-wide modulation of protein-protein interactions.</title>
        <authorList>
            <person name="Mayya V."/>
            <person name="Lundgren D.H."/>
            <person name="Hwang S.-I."/>
            <person name="Rezaul K."/>
            <person name="Wu L."/>
            <person name="Eng J.K."/>
            <person name="Rodionov V."/>
            <person name="Han D.K."/>
        </authorList>
    </citation>
    <scope>PHOSPHORYLATION [LARGE SCALE ANALYSIS] AT SER-159</scope>
    <scope>IDENTIFICATION BY MASS SPECTROMETRY [LARGE SCALE ANALYSIS]</scope>
    <source>
        <tissue>Leukemic T-cell</tissue>
    </source>
</reference>
<reference key="13">
    <citation type="journal article" date="2010" name="Sci. Signal.">
        <title>Quantitative phosphoproteomics reveals widespread full phosphorylation site occupancy during mitosis.</title>
        <authorList>
            <person name="Olsen J.V."/>
            <person name="Vermeulen M."/>
            <person name="Santamaria A."/>
            <person name="Kumar C."/>
            <person name="Miller M.L."/>
            <person name="Jensen L.J."/>
            <person name="Gnad F."/>
            <person name="Cox J."/>
            <person name="Jensen T.S."/>
            <person name="Nigg E.A."/>
            <person name="Brunak S."/>
            <person name="Mann M."/>
        </authorList>
    </citation>
    <scope>PHOSPHORYLATION [LARGE SCALE ANALYSIS] AT SER-159; SER-339; SER-351 AND SER-666</scope>
    <scope>IDENTIFICATION BY MASS SPECTROMETRY [LARGE SCALE ANALYSIS]</scope>
    <source>
        <tissue>Cervix carcinoma</tissue>
    </source>
</reference>
<reference key="14">
    <citation type="journal article" date="2011" name="BMC Syst. Biol.">
        <title>Initial characterization of the human central proteome.</title>
        <authorList>
            <person name="Burkard T.R."/>
            <person name="Planyavsky M."/>
            <person name="Kaupe I."/>
            <person name="Breitwieser F.P."/>
            <person name="Buerckstuemmer T."/>
            <person name="Bennett K.L."/>
            <person name="Superti-Furga G."/>
            <person name="Colinge J."/>
        </authorList>
    </citation>
    <scope>IDENTIFICATION BY MASS SPECTROMETRY [LARGE SCALE ANALYSIS]</scope>
</reference>
<reference key="15">
    <citation type="journal article" date="2011" name="J. Cell Biol.">
        <title>Osteoblast mineralization requires beta1 integrin/ICAP-1-dependent fibronectin deposition.</title>
        <authorList>
            <person name="Brunner M."/>
            <person name="Millon-Fremillon A."/>
            <person name="Chevalier G."/>
            <person name="Nakchbandi I.A."/>
            <person name="Mosher D."/>
            <person name="Block M.R."/>
            <person name="Albiges-Rizo C."/>
            <person name="Bouvard D."/>
        </authorList>
    </citation>
    <scope>INTERACTION WITH ITGB1</scope>
</reference>
<reference key="16">
    <citation type="journal article" date="2011" name="J. Cell Sci.">
        <title>Kindlin-2 regulates podocyte adhesion and fibronectin matrix deposition through interactions with phosphoinositides and integrins.</title>
        <authorList>
            <person name="Qu H."/>
            <person name="Tu Y."/>
            <person name="Shi X."/>
            <person name="Larjava H."/>
            <person name="Saleem M.A."/>
            <person name="Shattil S.J."/>
            <person name="Fukuda K."/>
            <person name="Qin J."/>
            <person name="Kretzler M."/>
            <person name="Wu C."/>
        </authorList>
    </citation>
    <scope>FUNCTION</scope>
    <scope>INTERACTION WITH ITGB1 AND ITGB3</scope>
    <scope>LIPID-BINDING</scope>
    <scope>MUTAGENESIS OF LYS-390</scope>
    <scope>SUBCELLULAR LOCATION</scope>
</reference>
<reference key="17">
    <citation type="journal article" date="2011" name="Sci. Signal.">
        <title>System-wide temporal characterization of the proteome and phosphoproteome of human embryonic stem cell differentiation.</title>
        <authorList>
            <person name="Rigbolt K.T."/>
            <person name="Prokhorova T.A."/>
            <person name="Akimov V."/>
            <person name="Henningsen J."/>
            <person name="Johansen P.T."/>
            <person name="Kratchmarova I."/>
            <person name="Kassem M."/>
            <person name="Mann M."/>
            <person name="Olsen J.V."/>
            <person name="Blagoev B."/>
        </authorList>
    </citation>
    <scope>PHOSPHORYLATION [LARGE SCALE ANALYSIS] AT SER-159; SER-351 AND SER-666</scope>
    <scope>IDENTIFICATION BY MASS SPECTROMETRY [LARGE SCALE ANALYSIS]</scope>
</reference>
<reference key="18">
    <citation type="journal article" date="2012" name="EMBO Rep.">
        <title>Kindlin 2 forms a transcriptional complex with beta-catenin and TCF4 to enhance Wnt signalling.</title>
        <authorList>
            <person name="Yu Y."/>
            <person name="Wu J."/>
            <person name="Wang Y."/>
            <person name="Zhao T."/>
            <person name="Ma B."/>
            <person name="Liu Y."/>
            <person name="Fang W."/>
            <person name="Zhu W.G."/>
            <person name="Zhang H."/>
        </authorList>
    </citation>
    <scope>FUNCTION</scope>
    <scope>INTERACTION WITH CTNNB1</scope>
    <scope>IDENTIFICATION IN A COMPLEX WITH CTNNB1 AND TCF7L2</scope>
    <scope>SUBCELLULAR LOCATION</scope>
</reference>
<reference key="19">
    <citation type="journal article" date="2013" name="J. Proteome Res.">
        <title>Toward a comprehensive characterization of a human cancer cell phosphoproteome.</title>
        <authorList>
            <person name="Zhou H."/>
            <person name="Di Palma S."/>
            <person name="Preisinger C."/>
            <person name="Peng M."/>
            <person name="Polat A.N."/>
            <person name="Heck A.J."/>
            <person name="Mohammed S."/>
        </authorList>
    </citation>
    <scope>PHOSPHORYLATION [LARGE SCALE ANALYSIS] AT SER-666</scope>
    <scope>IDENTIFICATION BY MASS SPECTROMETRY [LARGE SCALE ANALYSIS]</scope>
    <source>
        <tissue>Cervix carcinoma</tissue>
    </source>
</reference>
<reference key="20">
    <citation type="journal article" date="2014" name="J. Proteomics">
        <title>An enzyme assisted RP-RPLC approach for in-depth analysis of human liver phosphoproteome.</title>
        <authorList>
            <person name="Bian Y."/>
            <person name="Song C."/>
            <person name="Cheng K."/>
            <person name="Dong M."/>
            <person name="Wang F."/>
            <person name="Huang J."/>
            <person name="Sun D."/>
            <person name="Wang L."/>
            <person name="Ye M."/>
            <person name="Zou H."/>
        </authorList>
    </citation>
    <scope>PHOSPHORYLATION [LARGE SCALE ANALYSIS] AT SER-159 AND SER-351</scope>
    <scope>IDENTIFICATION BY MASS SPECTROMETRY [LARGE SCALE ANALYSIS]</scope>
    <source>
        <tissue>Liver</tissue>
    </source>
</reference>
<reference key="21">
    <citation type="journal article" date="2011" name="J. Biol. Chem.">
        <title>Structural basis of phosphoinositide binding to kindlin-2 protein pleckstrin homology domain in regulating integrin activation.</title>
        <authorList>
            <person name="Liu J."/>
            <person name="Fukuda K."/>
            <person name="Xu Z."/>
            <person name="Ma Y.Q."/>
            <person name="Hirbawi J."/>
            <person name="Mao X."/>
            <person name="Wu C."/>
            <person name="Plow E.F."/>
            <person name="Qin J."/>
        </authorList>
    </citation>
    <scope>STRUCTURE BY NMR OF 367-500 IN COMPLEX WITH PHOSPHATIDYLINOSITOL-3,4,5-TRISPHOSPHATE</scope>
    <scope>FUNCTION</scope>
    <scope>DOMAIN</scope>
    <scope>MUTAGENESIS OF LYS-383; LYS-385 AND LYS-393</scope>
    <scope>LIPID-BINDING</scope>
</reference>
<reference key="22">
    <citation type="journal article" date="2011" name="Structure">
        <title>Membrane binding of the N-terminal ubiquitin-like domain of kindlin-2 is crucial for its regulation of integrin activation.</title>
        <authorList>
            <person name="Perera H.D."/>
            <person name="Ma Y.Q."/>
            <person name="Yang J."/>
            <person name="Hirbawi J."/>
            <person name="Plow E.F."/>
            <person name="Qin J."/>
        </authorList>
    </citation>
    <scope>STRUCTURE BY NMR OF 1-105</scope>
    <scope>FUNCTION</scope>
    <scope>DOMAIN</scope>
    <scope>SUBCELLULAR LOCATION</scope>
    <scope>MUTAGENESIS OF HIS-40 AND 74-LYS--LYS-81</scope>
    <scope>LIPID-BINDING</scope>
</reference>
<reference key="23">
    <citation type="journal article" date="2012" name="Protein Cell">
        <title>Crystal structure of kindlin-2 PH domain reveals a conformational transition for its membrane anchoring and regulation of integrin activation.</title>
        <authorList>
            <person name="Liu Y."/>
            <person name="Zhu Y."/>
            <person name="Ye S."/>
            <person name="Zhang R."/>
        </authorList>
    </citation>
    <scope>X-RAY CRYSTALLOGRAPHY (1.9 ANGSTROMS) OF 328-499</scope>
</reference>
<gene>
    <name type="primary">FERMT2</name>
    <name type="synonym">KIND2</name>
    <name type="synonym">MIG2</name>
    <name type="synonym">PLEKHC1</name>
</gene>
<dbReference type="EMBL" id="Z24725">
    <property type="protein sequence ID" value="CAA80852.1"/>
    <property type="status" value="ALT_INIT"/>
    <property type="molecule type" value="mRNA"/>
</dbReference>
<dbReference type="EMBL" id="AF443279">
    <property type="protein sequence ID" value="AAN75823.1"/>
    <property type="molecule type" value="mRNA"/>
</dbReference>
<dbReference type="EMBL" id="EU979385">
    <property type="protein sequence ID" value="ACH73257.1"/>
    <property type="molecule type" value="mRNA"/>
</dbReference>
<dbReference type="EMBL" id="BX161467">
    <property type="protein sequence ID" value="CAD61925.1"/>
    <property type="molecule type" value="mRNA"/>
</dbReference>
<dbReference type="EMBL" id="AL139317">
    <property type="status" value="NOT_ANNOTATED_CDS"/>
    <property type="molecule type" value="Genomic_DNA"/>
</dbReference>
<dbReference type="EMBL" id="AL352979">
    <property type="status" value="NOT_ANNOTATED_CDS"/>
    <property type="molecule type" value="Genomic_DNA"/>
</dbReference>
<dbReference type="EMBL" id="BC011125">
    <property type="status" value="NOT_ANNOTATED_CDS"/>
    <property type="molecule type" value="mRNA"/>
</dbReference>
<dbReference type="EMBL" id="BC017327">
    <property type="protein sequence ID" value="AAH17327.1"/>
    <property type="molecule type" value="mRNA"/>
</dbReference>
<dbReference type="CCDS" id="CCDS45107.1">
    <molecule id="Q96AC1-3"/>
</dbReference>
<dbReference type="CCDS" id="CCDS45108.1">
    <molecule id="Q96AC1-2"/>
</dbReference>
<dbReference type="CCDS" id="CCDS9713.1">
    <molecule id="Q96AC1-1"/>
</dbReference>
<dbReference type="PIR" id="S69890">
    <property type="entry name" value="S69890"/>
</dbReference>
<dbReference type="RefSeq" id="NP_001128471.1">
    <molecule id="Q96AC1-3"/>
    <property type="nucleotide sequence ID" value="NM_001134999.2"/>
</dbReference>
<dbReference type="RefSeq" id="NP_001128472.1">
    <molecule id="Q96AC1-2"/>
    <property type="nucleotide sequence ID" value="NM_001135000.2"/>
</dbReference>
<dbReference type="RefSeq" id="NP_006823.1">
    <molecule id="Q96AC1-1"/>
    <property type="nucleotide sequence ID" value="NM_006832.3"/>
</dbReference>
<dbReference type="PDB" id="2LGX">
    <property type="method" value="NMR"/>
    <property type="chains" value="A=1-105"/>
</dbReference>
<dbReference type="PDB" id="2LKO">
    <property type="method" value="NMR"/>
    <property type="chains" value="A=367-500"/>
</dbReference>
<dbReference type="PDB" id="2MSU">
    <property type="method" value="NMR"/>
    <property type="chains" value="A=339-358"/>
</dbReference>
<dbReference type="PDB" id="4F7H">
    <property type="method" value="X-ray"/>
    <property type="resolution" value="1.90 A"/>
    <property type="chains" value="A=328-499"/>
</dbReference>
<dbReference type="PDB" id="6U4N">
    <property type="method" value="NMR"/>
    <property type="chains" value="A=1-105"/>
</dbReference>
<dbReference type="PDB" id="6XTJ">
    <property type="method" value="X-ray"/>
    <property type="resolution" value="1.60 A"/>
    <property type="chains" value="AAA=8-680"/>
</dbReference>
<dbReference type="PDBsum" id="2LGX"/>
<dbReference type="PDBsum" id="2LKO"/>
<dbReference type="PDBsum" id="2MSU"/>
<dbReference type="PDBsum" id="4F7H"/>
<dbReference type="PDBsum" id="6U4N"/>
<dbReference type="PDBsum" id="6XTJ"/>
<dbReference type="BMRB" id="Q96AC1"/>
<dbReference type="SMR" id="Q96AC1"/>
<dbReference type="BioGRID" id="116175">
    <property type="interactions" value="190"/>
</dbReference>
<dbReference type="CORUM" id="Q96AC1"/>
<dbReference type="FunCoup" id="Q96AC1">
    <property type="interactions" value="1828"/>
</dbReference>
<dbReference type="IntAct" id="Q96AC1">
    <property type="interactions" value="55"/>
</dbReference>
<dbReference type="MINT" id="Q96AC1"/>
<dbReference type="STRING" id="9606.ENSP00000342858"/>
<dbReference type="BindingDB" id="Q96AC1"/>
<dbReference type="ChEMBL" id="CHEMBL5465266"/>
<dbReference type="GlyGen" id="Q96AC1">
    <property type="glycosylation" value="1 site, 1 O-linked glycan (1 site)"/>
</dbReference>
<dbReference type="iPTMnet" id="Q96AC1"/>
<dbReference type="MetOSite" id="Q96AC1"/>
<dbReference type="PhosphoSitePlus" id="Q96AC1"/>
<dbReference type="SwissPalm" id="Q96AC1"/>
<dbReference type="BioMuta" id="FERMT2"/>
<dbReference type="DMDM" id="38258220"/>
<dbReference type="jPOST" id="Q96AC1"/>
<dbReference type="MassIVE" id="Q96AC1"/>
<dbReference type="PaxDb" id="9606-ENSP00000342858"/>
<dbReference type="PeptideAtlas" id="Q96AC1"/>
<dbReference type="ProteomicsDB" id="75949">
    <molecule id="Q96AC1-1"/>
</dbReference>
<dbReference type="ProteomicsDB" id="75950">
    <molecule id="Q96AC1-2"/>
</dbReference>
<dbReference type="ProteomicsDB" id="75951">
    <molecule id="Q96AC1-3"/>
</dbReference>
<dbReference type="Pumba" id="Q96AC1"/>
<dbReference type="Antibodypedia" id="23904">
    <property type="antibodies" value="326 antibodies from 32 providers"/>
</dbReference>
<dbReference type="DNASU" id="10979"/>
<dbReference type="Ensembl" id="ENST00000341590.8">
    <molecule id="Q96AC1-1"/>
    <property type="protein sequence ID" value="ENSP00000340391.3"/>
    <property type="gene ID" value="ENSG00000073712.15"/>
</dbReference>
<dbReference type="Ensembl" id="ENST00000343279.8">
    <molecule id="Q96AC1-3"/>
    <property type="protein sequence ID" value="ENSP00000342858.4"/>
    <property type="gene ID" value="ENSG00000073712.15"/>
</dbReference>
<dbReference type="Ensembl" id="ENST00000395631.6">
    <molecule id="Q96AC1-1"/>
    <property type="protein sequence ID" value="ENSP00000378993.2"/>
    <property type="gene ID" value="ENSG00000073712.15"/>
</dbReference>
<dbReference type="Ensembl" id="ENST00000399304.7">
    <molecule id="Q96AC1-2"/>
    <property type="protein sequence ID" value="ENSP00000382243.3"/>
    <property type="gene ID" value="ENSG00000073712.15"/>
</dbReference>
<dbReference type="Ensembl" id="ENST00000553373.5">
    <molecule id="Q96AC1-3"/>
    <property type="protein sequence ID" value="ENSP00000451084.1"/>
    <property type="gene ID" value="ENSG00000073712.15"/>
</dbReference>
<dbReference type="GeneID" id="10979"/>
<dbReference type="KEGG" id="hsa:10979"/>
<dbReference type="MANE-Select" id="ENST00000341590.8">
    <property type="protein sequence ID" value="ENSP00000340391.3"/>
    <property type="RefSeq nucleotide sequence ID" value="NM_006832.3"/>
    <property type="RefSeq protein sequence ID" value="NP_006823.1"/>
</dbReference>
<dbReference type="UCSC" id="uc001xac.4">
    <molecule id="Q96AC1-1"/>
    <property type="organism name" value="human"/>
</dbReference>
<dbReference type="AGR" id="HGNC:15767"/>
<dbReference type="CTD" id="10979"/>
<dbReference type="DisGeNET" id="10979"/>
<dbReference type="GeneCards" id="FERMT2"/>
<dbReference type="HGNC" id="HGNC:15767">
    <property type="gene designation" value="FERMT2"/>
</dbReference>
<dbReference type="HPA" id="ENSG00000073712">
    <property type="expression patterns" value="Low tissue specificity"/>
</dbReference>
<dbReference type="MIM" id="607746">
    <property type="type" value="gene"/>
</dbReference>
<dbReference type="neXtProt" id="NX_Q96AC1"/>
<dbReference type="NIAGADS" id="ENSG00000073712"/>
<dbReference type="OpenTargets" id="ENSG00000073712"/>
<dbReference type="PharmGKB" id="PA162388349"/>
<dbReference type="VEuPathDB" id="HostDB:ENSG00000073712"/>
<dbReference type="eggNOG" id="KOG3727">
    <property type="taxonomic scope" value="Eukaryota"/>
</dbReference>
<dbReference type="GeneTree" id="ENSGT00390000013444"/>
<dbReference type="HOGENOM" id="CLU_011611_0_0_1"/>
<dbReference type="InParanoid" id="Q96AC1"/>
<dbReference type="OMA" id="PEHGIHY"/>
<dbReference type="OrthoDB" id="10057618at2759"/>
<dbReference type="PAN-GO" id="Q96AC1">
    <property type="GO annotations" value="4 GO annotations based on evolutionary models"/>
</dbReference>
<dbReference type="PhylomeDB" id="Q96AC1"/>
<dbReference type="TreeFam" id="TF314677"/>
<dbReference type="PathwayCommons" id="Q96AC1"/>
<dbReference type="Reactome" id="R-HSA-446353">
    <property type="pathway name" value="Cell-extracellular matrix interactions"/>
</dbReference>
<dbReference type="Reactome" id="R-HSA-9013149">
    <property type="pathway name" value="RAC1 GTPase cycle"/>
</dbReference>
<dbReference type="Reactome" id="R-HSA-9013423">
    <property type="pathway name" value="RAC3 GTPase cycle"/>
</dbReference>
<dbReference type="SignaLink" id="Q96AC1"/>
<dbReference type="SIGNOR" id="Q96AC1"/>
<dbReference type="BioGRID-ORCS" id="10979">
    <property type="hits" value="350 hits in 1180 CRISPR screens"/>
</dbReference>
<dbReference type="ChiTaRS" id="FERMT2">
    <property type="organism name" value="human"/>
</dbReference>
<dbReference type="EvolutionaryTrace" id="Q96AC1"/>
<dbReference type="GeneWiki" id="FERMT2"/>
<dbReference type="GenomeRNAi" id="10979"/>
<dbReference type="Pharos" id="Q96AC1">
    <property type="development level" value="Tbio"/>
</dbReference>
<dbReference type="PRO" id="PR:Q96AC1"/>
<dbReference type="Proteomes" id="UP000005640">
    <property type="component" value="Chromosome 14"/>
</dbReference>
<dbReference type="RNAct" id="Q96AC1">
    <property type="molecule type" value="protein"/>
</dbReference>
<dbReference type="Bgee" id="ENSG00000073712">
    <property type="expression patterns" value="Expressed in decidua and 207 other cell types or tissues"/>
</dbReference>
<dbReference type="ExpressionAtlas" id="Q96AC1">
    <property type="expression patterns" value="baseline and differential"/>
</dbReference>
<dbReference type="GO" id="GO:0005912">
    <property type="term" value="C:adherens junction"/>
    <property type="evidence" value="ECO:0000314"/>
    <property type="project" value="ARUK-UCL"/>
</dbReference>
<dbReference type="GO" id="GO:0005938">
    <property type="term" value="C:cell cortex"/>
    <property type="evidence" value="ECO:0007669"/>
    <property type="project" value="UniProtKB-SubCell"/>
</dbReference>
<dbReference type="GO" id="GO:0030054">
    <property type="term" value="C:cell junction"/>
    <property type="evidence" value="ECO:0000314"/>
    <property type="project" value="ARUK-UCL"/>
</dbReference>
<dbReference type="GO" id="GO:0009986">
    <property type="term" value="C:cell surface"/>
    <property type="evidence" value="ECO:0007669"/>
    <property type="project" value="UniProtKB-SubCell"/>
</dbReference>
<dbReference type="GO" id="GO:0005737">
    <property type="term" value="C:cytoplasm"/>
    <property type="evidence" value="ECO:0000314"/>
    <property type="project" value="UniProtKB"/>
</dbReference>
<dbReference type="GO" id="GO:0009898">
    <property type="term" value="C:cytoplasmic side of plasma membrane"/>
    <property type="evidence" value="ECO:0000314"/>
    <property type="project" value="UniProtKB"/>
</dbReference>
<dbReference type="GO" id="GO:0005829">
    <property type="term" value="C:cytosol"/>
    <property type="evidence" value="ECO:0000314"/>
    <property type="project" value="ARUK-UCL"/>
</dbReference>
<dbReference type="GO" id="GO:0005925">
    <property type="term" value="C:focal adhesion"/>
    <property type="evidence" value="ECO:0000314"/>
    <property type="project" value="HPA"/>
</dbReference>
<dbReference type="GO" id="GO:0031674">
    <property type="term" value="C:I band"/>
    <property type="evidence" value="ECO:0007669"/>
    <property type="project" value="UniProtKB-SubCell"/>
</dbReference>
<dbReference type="GO" id="GO:0031258">
    <property type="term" value="C:lamellipodium membrane"/>
    <property type="evidence" value="ECO:0007669"/>
    <property type="project" value="UniProtKB-SubCell"/>
</dbReference>
<dbReference type="GO" id="GO:0005654">
    <property type="term" value="C:nucleoplasm"/>
    <property type="evidence" value="ECO:0000314"/>
    <property type="project" value="HPA"/>
</dbReference>
<dbReference type="GO" id="GO:0005634">
    <property type="term" value="C:nucleus"/>
    <property type="evidence" value="ECO:0000314"/>
    <property type="project" value="UniProtKB"/>
</dbReference>
<dbReference type="GO" id="GO:0005886">
    <property type="term" value="C:plasma membrane"/>
    <property type="evidence" value="ECO:0000314"/>
    <property type="project" value="ARUK-UCL"/>
</dbReference>
<dbReference type="GO" id="GO:0001725">
    <property type="term" value="C:stress fiber"/>
    <property type="evidence" value="ECO:0007669"/>
    <property type="project" value="UniProtKB-SubCell"/>
</dbReference>
<dbReference type="GO" id="GO:0003779">
    <property type="term" value="F:actin binding"/>
    <property type="evidence" value="ECO:0000315"/>
    <property type="project" value="ARUK-UCL"/>
</dbReference>
<dbReference type="GO" id="GO:0051015">
    <property type="term" value="F:actin filament binding"/>
    <property type="evidence" value="ECO:0007669"/>
    <property type="project" value="Ensembl"/>
</dbReference>
<dbReference type="GO" id="GO:0005178">
    <property type="term" value="F:integrin binding"/>
    <property type="evidence" value="ECO:0000318"/>
    <property type="project" value="GO_Central"/>
</dbReference>
<dbReference type="GO" id="GO:0005547">
    <property type="term" value="F:phosphatidylinositol-3,4,5-trisphosphate binding"/>
    <property type="evidence" value="ECO:0000314"/>
    <property type="project" value="UniProtKB"/>
</dbReference>
<dbReference type="GO" id="GO:0019901">
    <property type="term" value="F:protein kinase binding"/>
    <property type="evidence" value="ECO:0000353"/>
    <property type="project" value="ARUK-UCL"/>
</dbReference>
<dbReference type="GO" id="GO:0043539">
    <property type="term" value="F:protein serine/threonine kinase activator activity"/>
    <property type="evidence" value="ECO:0000315"/>
    <property type="project" value="ARUK-UCL"/>
</dbReference>
<dbReference type="GO" id="GO:0120283">
    <property type="term" value="F:protein serine/threonine kinase binding"/>
    <property type="evidence" value="ECO:0000353"/>
    <property type="project" value="ARUK-UCL"/>
</dbReference>
<dbReference type="GO" id="GO:0046332">
    <property type="term" value="F:SMAD binding"/>
    <property type="evidence" value="ECO:0000353"/>
    <property type="project" value="ARUK-UCL"/>
</dbReference>
<dbReference type="GO" id="GO:0034713">
    <property type="term" value="F:type I transforming growth factor beta receptor binding"/>
    <property type="evidence" value="ECO:0000353"/>
    <property type="project" value="ARUK-UCL"/>
</dbReference>
<dbReference type="GO" id="GO:0034334">
    <property type="term" value="P:adherens junction maintenance"/>
    <property type="evidence" value="ECO:0000315"/>
    <property type="project" value="ARUK-UCL"/>
</dbReference>
<dbReference type="GO" id="GO:0007155">
    <property type="term" value="P:cell adhesion"/>
    <property type="evidence" value="ECO:0000315"/>
    <property type="project" value="ARUK-UCL"/>
</dbReference>
<dbReference type="GO" id="GO:0007160">
    <property type="term" value="P:cell-matrix adhesion"/>
    <property type="evidence" value="ECO:0000315"/>
    <property type="project" value="UniProtKB"/>
</dbReference>
<dbReference type="GO" id="GO:0048041">
    <property type="term" value="P:focal adhesion assembly"/>
    <property type="evidence" value="ECO:0000315"/>
    <property type="project" value="ARUK-UCL"/>
</dbReference>
<dbReference type="GO" id="GO:0033622">
    <property type="term" value="P:integrin activation"/>
    <property type="evidence" value="ECO:0000315"/>
    <property type="project" value="UniProtKB"/>
</dbReference>
<dbReference type="GO" id="GO:0007229">
    <property type="term" value="P:integrin-mediated signaling pathway"/>
    <property type="evidence" value="ECO:0000315"/>
    <property type="project" value="UniProtKB"/>
</dbReference>
<dbReference type="GO" id="GO:0060173">
    <property type="term" value="P:limb development"/>
    <property type="evidence" value="ECO:0007669"/>
    <property type="project" value="Ensembl"/>
</dbReference>
<dbReference type="GO" id="GO:0045599">
    <property type="term" value="P:negative regulation of fat cell differentiation"/>
    <property type="evidence" value="ECO:0000315"/>
    <property type="project" value="ARUK-UCL"/>
</dbReference>
<dbReference type="GO" id="GO:0043116">
    <property type="term" value="P:negative regulation of vascular permeability"/>
    <property type="evidence" value="ECO:0000315"/>
    <property type="project" value="ARUK-UCL"/>
</dbReference>
<dbReference type="GO" id="GO:0030335">
    <property type="term" value="P:positive regulation of cell migration"/>
    <property type="evidence" value="ECO:0000315"/>
    <property type="project" value="ARUK-UCL"/>
</dbReference>
<dbReference type="GO" id="GO:0010718">
    <property type="term" value="P:positive regulation of epithelial to mesenchymal transition"/>
    <property type="evidence" value="ECO:0000314"/>
    <property type="project" value="ARUK-UCL"/>
</dbReference>
<dbReference type="GO" id="GO:0070374">
    <property type="term" value="P:positive regulation of ERK1 and ERK2 cascade"/>
    <property type="evidence" value="ECO:0000314"/>
    <property type="project" value="ARUK-UCL"/>
</dbReference>
<dbReference type="GO" id="GO:0051894">
    <property type="term" value="P:positive regulation of focal adhesion assembly"/>
    <property type="evidence" value="ECO:0000315"/>
    <property type="project" value="ARUK-UCL"/>
</dbReference>
<dbReference type="GO" id="GO:0033625">
    <property type="term" value="P:positive regulation of integrin activation"/>
    <property type="evidence" value="ECO:0000316"/>
    <property type="project" value="ARUK-UCL"/>
</dbReference>
<dbReference type="GO" id="GO:1902462">
    <property type="term" value="P:positive regulation of mesenchymal stem cell proliferation"/>
    <property type="evidence" value="ECO:0000315"/>
    <property type="project" value="ARUK-UCL"/>
</dbReference>
<dbReference type="GO" id="GO:0045669">
    <property type="term" value="P:positive regulation of osteoblast differentiation"/>
    <property type="evidence" value="ECO:0000315"/>
    <property type="project" value="ARUK-UCL"/>
</dbReference>
<dbReference type="GO" id="GO:0051897">
    <property type="term" value="P:positive regulation of phosphatidylinositol 3-kinase/protein kinase B signal transduction"/>
    <property type="evidence" value="ECO:0000314"/>
    <property type="project" value="ARUK-UCL"/>
</dbReference>
<dbReference type="GO" id="GO:1900182">
    <property type="term" value="P:positive regulation of protein localization to nucleus"/>
    <property type="evidence" value="ECO:0000314"/>
    <property type="project" value="ARUK-UCL"/>
</dbReference>
<dbReference type="GO" id="GO:0035025">
    <property type="term" value="P:positive regulation of Rho protein signal transduction"/>
    <property type="evidence" value="ECO:0000315"/>
    <property type="project" value="ARUK-UCL"/>
</dbReference>
<dbReference type="GO" id="GO:0051496">
    <property type="term" value="P:positive regulation of stress fiber assembly"/>
    <property type="evidence" value="ECO:0000315"/>
    <property type="project" value="ARUK-UCL"/>
</dbReference>
<dbReference type="GO" id="GO:1900026">
    <property type="term" value="P:positive regulation of substrate adhesion-dependent cell spreading"/>
    <property type="evidence" value="ECO:0000316"/>
    <property type="project" value="ARUK-UCL"/>
</dbReference>
<dbReference type="GO" id="GO:1903691">
    <property type="term" value="P:positive regulation of wound healing, spreading of epidermal cells"/>
    <property type="evidence" value="ECO:0000315"/>
    <property type="project" value="ARUK-UCL"/>
</dbReference>
<dbReference type="GO" id="GO:1902414">
    <property type="term" value="P:protein localization to cell junction"/>
    <property type="evidence" value="ECO:0000315"/>
    <property type="project" value="ARUK-UCL"/>
</dbReference>
<dbReference type="GO" id="GO:0072657">
    <property type="term" value="P:protein localization to membrane"/>
    <property type="evidence" value="ECO:0000250"/>
    <property type="project" value="UniProtKB"/>
</dbReference>
<dbReference type="GO" id="GO:0022604">
    <property type="term" value="P:regulation of cell morphogenesis"/>
    <property type="evidence" value="ECO:0000315"/>
    <property type="project" value="ARUK-UCL"/>
</dbReference>
<dbReference type="GO" id="GO:0008360">
    <property type="term" value="P:regulation of cell shape"/>
    <property type="evidence" value="ECO:0007669"/>
    <property type="project" value="UniProtKB-KW"/>
</dbReference>
<dbReference type="GO" id="GO:0034446">
    <property type="term" value="P:substrate adhesion-dependent cell spreading"/>
    <property type="evidence" value="ECO:0000250"/>
    <property type="project" value="UniProtKB"/>
</dbReference>
<dbReference type="GO" id="GO:0007179">
    <property type="term" value="P:transforming growth factor beta receptor signaling pathway"/>
    <property type="evidence" value="ECO:0000315"/>
    <property type="project" value="UniProtKB"/>
</dbReference>
<dbReference type="GO" id="GO:0016055">
    <property type="term" value="P:Wnt signaling pathway"/>
    <property type="evidence" value="ECO:0000315"/>
    <property type="project" value="UniProtKB"/>
</dbReference>
<dbReference type="CDD" id="cd14473">
    <property type="entry name" value="FERM_B-lobe"/>
    <property type="match status" value="1"/>
</dbReference>
<dbReference type="CDD" id="cd13205">
    <property type="entry name" value="FERM_C_fermitin"/>
    <property type="match status" value="1"/>
</dbReference>
<dbReference type="CDD" id="cd17181">
    <property type="entry name" value="FERM_F0_KIND2"/>
    <property type="match status" value="1"/>
</dbReference>
<dbReference type="CDD" id="cd17184">
    <property type="entry name" value="FERM_F1_KIND2"/>
    <property type="match status" value="1"/>
</dbReference>
<dbReference type="CDD" id="cd01237">
    <property type="entry name" value="PH_fermitin"/>
    <property type="match status" value="1"/>
</dbReference>
<dbReference type="DisProt" id="DP01613"/>
<dbReference type="FunFam" id="2.30.29.30:FF:000037">
    <property type="entry name" value="Fermitin family homolog 2"/>
    <property type="match status" value="1"/>
</dbReference>
<dbReference type="FunFam" id="2.30.29.30:FF:000057">
    <property type="entry name" value="Fermitin family homolog 2 (Drosophila)"/>
    <property type="match status" value="1"/>
</dbReference>
<dbReference type="FunFam" id="3.10.20.90:FF:000035">
    <property type="entry name" value="Fermitin family homolog 2 (Drosophila)"/>
    <property type="match status" value="1"/>
</dbReference>
<dbReference type="Gene3D" id="3.10.20.90">
    <property type="entry name" value="Phosphatidylinositol 3-kinase Catalytic Subunit, Chain A, domain 1"/>
    <property type="match status" value="2"/>
</dbReference>
<dbReference type="Gene3D" id="2.30.29.30">
    <property type="entry name" value="Pleckstrin-homology domain (PH domain)/Phosphotyrosine-binding domain (PTB)"/>
    <property type="match status" value="2"/>
</dbReference>
<dbReference type="InterPro" id="IPR019749">
    <property type="entry name" value="Band_41_domain"/>
</dbReference>
<dbReference type="InterPro" id="IPR035963">
    <property type="entry name" value="FERM_2"/>
</dbReference>
<dbReference type="InterPro" id="IPR019748">
    <property type="entry name" value="FERM_central"/>
</dbReference>
<dbReference type="InterPro" id="IPR037843">
    <property type="entry name" value="Kindlin/fermitin"/>
</dbReference>
<dbReference type="InterPro" id="IPR040790">
    <property type="entry name" value="Kindlin_2_N"/>
</dbReference>
<dbReference type="InterPro" id="IPR011993">
    <property type="entry name" value="PH-like_dom_sf"/>
</dbReference>
<dbReference type="InterPro" id="IPR001849">
    <property type="entry name" value="PH_domain"/>
</dbReference>
<dbReference type="InterPro" id="IPR037837">
    <property type="entry name" value="PH_Kindlin/fermitin"/>
</dbReference>
<dbReference type="PANTHER" id="PTHR16160">
    <property type="entry name" value="FERMITIN 2-RELATED"/>
    <property type="match status" value="1"/>
</dbReference>
<dbReference type="PANTHER" id="PTHR16160:SF11">
    <property type="entry name" value="FERMITIN FAMILY HOMOLOG 2"/>
    <property type="match status" value="1"/>
</dbReference>
<dbReference type="Pfam" id="PF00373">
    <property type="entry name" value="FERM_M"/>
    <property type="match status" value="1"/>
</dbReference>
<dbReference type="Pfam" id="PF18124">
    <property type="entry name" value="Kindlin_2_N"/>
    <property type="match status" value="1"/>
</dbReference>
<dbReference type="Pfam" id="PF00169">
    <property type="entry name" value="PH"/>
    <property type="match status" value="1"/>
</dbReference>
<dbReference type="SMART" id="SM00295">
    <property type="entry name" value="B41"/>
    <property type="match status" value="1"/>
</dbReference>
<dbReference type="SMART" id="SM00233">
    <property type="entry name" value="PH"/>
    <property type="match status" value="1"/>
</dbReference>
<dbReference type="SUPFAM" id="SSF50729">
    <property type="entry name" value="PH domain-like"/>
    <property type="match status" value="2"/>
</dbReference>
<dbReference type="SUPFAM" id="SSF47031">
    <property type="entry name" value="Second domain of FERM"/>
    <property type="match status" value="2"/>
</dbReference>
<dbReference type="PROSITE" id="PS50003">
    <property type="entry name" value="PH_DOMAIN"/>
    <property type="match status" value="1"/>
</dbReference>
<feature type="chain" id="PRO_0000219456" description="Fermitin family homolog 2">
    <location>
        <begin position="1"/>
        <end position="680"/>
    </location>
</feature>
<feature type="domain" description="FERM">
    <location>
        <begin position="189"/>
        <end position="661"/>
    </location>
</feature>
<feature type="domain" description="PH" evidence="2">
    <location>
        <begin position="380"/>
        <end position="476"/>
    </location>
</feature>
<feature type="region of interest" description="Interaction with membranes containing phosphatidylinositol phosphate">
    <location>
        <begin position="40"/>
        <end position="81"/>
    </location>
</feature>
<feature type="region of interest" description="Disordered" evidence="3">
    <location>
        <begin position="141"/>
        <end position="165"/>
    </location>
</feature>
<feature type="binding site">
    <location>
        <position position="383"/>
    </location>
    <ligand>
        <name>a 1,2-diacyl-sn-glycero-3-phospho-(1D-myo-inositol-3,4,5-trisphosphate)</name>
        <dbReference type="ChEBI" id="CHEBI:57836"/>
    </ligand>
</feature>
<feature type="modified residue" description="Phosphoserine" evidence="15 17 18 19 21">
    <location>
        <position position="159"/>
    </location>
</feature>
<feature type="modified residue" description="Phosphoserine" evidence="15">
    <location>
        <position position="181"/>
    </location>
</feature>
<feature type="modified residue" description="Phosphoserine" evidence="18">
    <location>
        <position position="339"/>
    </location>
</feature>
<feature type="modified residue" description="Phosphoserine" evidence="18 19 21">
    <location>
        <position position="351"/>
    </location>
</feature>
<feature type="modified residue" description="Phosphoserine" evidence="15 16 18 19 20">
    <location>
        <position position="666"/>
    </location>
</feature>
<feature type="splice variant" id="VSP_008783" description="In isoform 2 and isoform 3." evidence="12 13">
    <original>Q</original>
    <variation>QPGYIRDL</variation>
    <location>
        <position position="534"/>
    </location>
</feature>
<feature type="splice variant" id="VSP_008784" description="In isoform 2." evidence="13">
    <original>TV</original>
    <variation>NS</variation>
    <location>
        <begin position="625"/>
        <end position="626"/>
    </location>
</feature>
<feature type="splice variant" id="VSP_008785" description="In isoform 2." evidence="13">
    <location>
        <begin position="627"/>
        <end position="680"/>
    </location>
</feature>
<feature type="mutagenesis site" description="Abolishes lipid-binding via the N-terminus; when associated with 74-A--A-81." evidence="9">
    <original>H</original>
    <variation>A</variation>
    <location>
        <position position="40"/>
    </location>
</feature>
<feature type="mutagenesis site" description="Abolishes lipid-binding via the N-terminus; when associated with A-40." evidence="9">
    <original>KTHWTLDK</original>
    <variation>ATAATLDA</variation>
    <location>
        <begin position="74"/>
        <end position="81"/>
    </location>
</feature>
<feature type="mutagenesis site" description="Reduces phosphatidylinositol phosphate binding. Reduces integrin activation; when associated with A-385." evidence="8">
    <original>K</original>
    <variation>A</variation>
    <location>
        <position position="383"/>
    </location>
</feature>
<feature type="mutagenesis site" description="Reduces integrin activation; when associated with A-383." evidence="8">
    <original>K</original>
    <variation>A</variation>
    <location>
        <position position="385"/>
    </location>
</feature>
<feature type="mutagenesis site" description="Abolishes phosphatidylinositol phosphate binding." evidence="6">
    <original>K</original>
    <variation>A</variation>
    <location>
        <position position="390"/>
    </location>
</feature>
<feature type="mutagenesis site" description="Reduces phosphatidylinositol phosphate binding." evidence="8">
    <original>K</original>
    <variation>A</variation>
    <location>
        <position position="393"/>
    </location>
</feature>
<feature type="mutagenesis site" description="Impairs ITGB3 binding. Abolishes enhancement of talin-mediated integrin activation." evidence="5">
    <original>QW</original>
    <variation>AA</variation>
    <location>
        <begin position="614"/>
        <end position="615"/>
    </location>
</feature>
<feature type="sequence conflict" description="In Ref. 1; CAA80852." evidence="14" ref="1">
    <original>V</original>
    <variation>I</variation>
    <location>
        <position position="31"/>
    </location>
</feature>
<feature type="turn" evidence="22">
    <location>
        <begin position="9"/>
        <end position="11"/>
    </location>
</feature>
<feature type="strand" evidence="22">
    <location>
        <begin position="12"/>
        <end position="16"/>
    </location>
</feature>
<feature type="strand" evidence="25">
    <location>
        <begin position="18"/>
        <end position="23"/>
    </location>
</feature>
<feature type="turn" evidence="22">
    <location>
        <begin position="25"/>
        <end position="28"/>
    </location>
</feature>
<feature type="strand" evidence="25">
    <location>
        <begin position="30"/>
        <end position="35"/>
    </location>
</feature>
<feature type="helix" evidence="22">
    <location>
        <begin position="41"/>
        <end position="51"/>
    </location>
</feature>
<feature type="strand" evidence="22">
    <location>
        <begin position="58"/>
        <end position="65"/>
    </location>
</feature>
<feature type="turn" evidence="22">
    <location>
        <begin position="66"/>
        <end position="68"/>
    </location>
</feature>
<feature type="strand" evidence="25">
    <location>
        <begin position="75"/>
        <end position="77"/>
    </location>
</feature>
<feature type="helix" evidence="22">
    <location>
        <begin position="79"/>
        <end position="82"/>
    </location>
</feature>
<feature type="strand" evidence="25">
    <location>
        <begin position="90"/>
        <end position="92"/>
    </location>
</feature>
<feature type="turn" evidence="23">
    <location>
        <begin position="347"/>
        <end position="353"/>
    </location>
</feature>
<feature type="helix" evidence="23">
    <location>
        <begin position="354"/>
        <end position="357"/>
    </location>
</feature>
<feature type="helix" evidence="24">
    <location>
        <begin position="369"/>
        <end position="371"/>
    </location>
</feature>
<feature type="strand" evidence="24">
    <location>
        <begin position="375"/>
        <end position="382"/>
    </location>
</feature>
<feature type="strand" evidence="24">
    <location>
        <begin position="393"/>
        <end position="400"/>
    </location>
</feature>
<feature type="strand" evidence="24">
    <location>
        <begin position="403"/>
        <end position="408"/>
    </location>
</feature>
<feature type="helix" evidence="24">
    <location>
        <begin position="410"/>
        <end position="412"/>
    </location>
</feature>
<feature type="strand" evidence="24">
    <location>
        <begin position="418"/>
        <end position="422"/>
    </location>
</feature>
<feature type="strand" evidence="24">
    <location>
        <begin position="427"/>
        <end position="433"/>
    </location>
</feature>
<feature type="turn" evidence="24">
    <location>
        <begin position="434"/>
        <end position="437"/>
    </location>
</feature>
<feature type="strand" evidence="24">
    <location>
        <begin position="438"/>
        <end position="447"/>
    </location>
</feature>
<feature type="strand" evidence="24">
    <location>
        <begin position="450"/>
        <end position="460"/>
    </location>
</feature>
<feature type="helix" evidence="24">
    <location>
        <begin position="461"/>
        <end position="475"/>
    </location>
</feature>
<feature type="helix" evidence="24">
    <location>
        <begin position="484"/>
        <end position="495"/>
    </location>
</feature>
<accession>Q96AC1</accession>
<accession>B5TJY2</accession>
<accession>Q14840</accession>
<accession>Q86TY7</accession>
<name>FERM2_HUMAN</name>
<keyword id="KW-0002">3D-structure</keyword>
<keyword id="KW-0025">Alternative splicing</keyword>
<keyword id="KW-0130">Cell adhesion</keyword>
<keyword id="KW-0965">Cell junction</keyword>
<keyword id="KW-1003">Cell membrane</keyword>
<keyword id="KW-0966">Cell projection</keyword>
<keyword id="KW-0133">Cell shape</keyword>
<keyword id="KW-0963">Cytoplasm</keyword>
<keyword id="KW-0206">Cytoskeleton</keyword>
<keyword id="KW-0446">Lipid-binding</keyword>
<keyword id="KW-0472">Membrane</keyword>
<keyword id="KW-0539">Nucleus</keyword>
<keyword id="KW-0597">Phosphoprotein</keyword>
<keyword id="KW-1267">Proteomics identification</keyword>
<keyword id="KW-1185">Reference proteome</keyword>
<keyword id="KW-0879">Wnt signaling pathway</keyword>
<proteinExistence type="evidence at protein level"/>
<organism>
    <name type="scientific">Homo sapiens</name>
    <name type="common">Human</name>
    <dbReference type="NCBI Taxonomy" id="9606"/>
    <lineage>
        <taxon>Eukaryota</taxon>
        <taxon>Metazoa</taxon>
        <taxon>Chordata</taxon>
        <taxon>Craniata</taxon>
        <taxon>Vertebrata</taxon>
        <taxon>Euteleostomi</taxon>
        <taxon>Mammalia</taxon>
        <taxon>Eutheria</taxon>
        <taxon>Euarchontoglires</taxon>
        <taxon>Primates</taxon>
        <taxon>Haplorrhini</taxon>
        <taxon>Catarrhini</taxon>
        <taxon>Hominidae</taxon>
        <taxon>Homo</taxon>
    </lineage>
</organism>